<comment type="function">
    <text evidence="1">Acts as a transcriptional regulator. Binds DNA and RNA (By similarity).</text>
</comment>
<comment type="subcellular location">
    <subcellularLocation>
        <location evidence="2">Nucleus</location>
    </subcellularLocation>
    <subcellularLocation>
        <location evidence="2">Cytoplasm</location>
    </subcellularLocation>
    <text evidence="2">Shuttles between the nucleus and the cytoplasm in a TNPO1-dependent manner.</text>
</comment>
<gene>
    <name type="primary">hnrnpdl</name>
    <name type="synonym">hnrpdl</name>
    <name type="ORF">TNeu073n10.1</name>
</gene>
<accession>Q640A2</accession>
<name>HNRDL_XENTR</name>
<evidence type="ECO:0000250" key="1"/>
<evidence type="ECO:0000250" key="2">
    <source>
        <dbReference type="UniProtKB" id="O14979"/>
    </source>
</evidence>
<evidence type="ECO:0000255" key="3">
    <source>
        <dbReference type="PROSITE-ProRule" id="PRU00176"/>
    </source>
</evidence>
<evidence type="ECO:0000256" key="4">
    <source>
        <dbReference type="SAM" id="MobiDB-lite"/>
    </source>
</evidence>
<proteinExistence type="evidence at transcript level"/>
<organism>
    <name type="scientific">Xenopus tropicalis</name>
    <name type="common">Western clawed frog</name>
    <name type="synonym">Silurana tropicalis</name>
    <dbReference type="NCBI Taxonomy" id="8364"/>
    <lineage>
        <taxon>Eukaryota</taxon>
        <taxon>Metazoa</taxon>
        <taxon>Chordata</taxon>
        <taxon>Craniata</taxon>
        <taxon>Vertebrata</taxon>
        <taxon>Euteleostomi</taxon>
        <taxon>Amphibia</taxon>
        <taxon>Batrachia</taxon>
        <taxon>Anura</taxon>
        <taxon>Pipoidea</taxon>
        <taxon>Pipidae</taxon>
        <taxon>Xenopodinae</taxon>
        <taxon>Xenopus</taxon>
        <taxon>Silurana</taxon>
    </lineage>
</organism>
<feature type="chain" id="PRO_0000287245" description="Heterogeneous nuclear ribonucleoprotein D-like">
    <location>
        <begin position="1"/>
        <end position="297"/>
    </location>
</feature>
<feature type="domain" description="RRM 1" evidence="3">
    <location>
        <begin position="26"/>
        <end position="108"/>
    </location>
</feature>
<feature type="domain" description="RRM 2" evidence="3">
    <location>
        <begin position="111"/>
        <end position="190"/>
    </location>
</feature>
<feature type="region of interest" description="Disordered" evidence="4">
    <location>
        <begin position="1"/>
        <end position="21"/>
    </location>
</feature>
<feature type="region of interest" description="Disordered" evidence="4">
    <location>
        <begin position="192"/>
        <end position="224"/>
    </location>
</feature>
<feature type="compositionally biased region" description="Gly residues" evidence="4">
    <location>
        <begin position="202"/>
        <end position="222"/>
    </location>
</feature>
<keyword id="KW-0963">Cytoplasm</keyword>
<keyword id="KW-0238">DNA-binding</keyword>
<keyword id="KW-0488">Methylation</keyword>
<keyword id="KW-0539">Nucleus</keyword>
<keyword id="KW-1185">Reference proteome</keyword>
<keyword id="KW-0677">Repeat</keyword>
<keyword id="KW-0694">RNA-binding</keyword>
<keyword id="KW-0804">Transcription</keyword>
<keyword id="KW-0805">Transcription regulation</keyword>
<dbReference type="EMBL" id="CR761892">
    <property type="protein sequence ID" value="CAJ82429.1"/>
    <property type="molecule type" value="mRNA"/>
</dbReference>
<dbReference type="EMBL" id="BC082729">
    <property type="protein sequence ID" value="AAH82729.1"/>
    <property type="molecule type" value="mRNA"/>
</dbReference>
<dbReference type="RefSeq" id="NP_001011015.1">
    <property type="nucleotide sequence ID" value="NM_001011015.1"/>
</dbReference>
<dbReference type="RefSeq" id="XP_031754702.1">
    <property type="nucleotide sequence ID" value="XM_031898842.1"/>
</dbReference>
<dbReference type="SMR" id="Q640A2"/>
<dbReference type="FunCoup" id="Q640A2">
    <property type="interactions" value="3778"/>
</dbReference>
<dbReference type="STRING" id="8364.ENSXETP00000028487"/>
<dbReference type="PaxDb" id="8364-ENSXETP00000027520"/>
<dbReference type="GeneID" id="496424"/>
<dbReference type="KEGG" id="xtr:496424"/>
<dbReference type="AGR" id="Xenbase:XB-GENE-495016"/>
<dbReference type="CTD" id="9987"/>
<dbReference type="Xenbase" id="XB-GENE-495016">
    <property type="gene designation" value="hnrnpdl"/>
</dbReference>
<dbReference type="eggNOG" id="KOG0118">
    <property type="taxonomic scope" value="Eukaryota"/>
</dbReference>
<dbReference type="HOGENOM" id="CLU_012062_1_1_1"/>
<dbReference type="InParanoid" id="Q640A2"/>
<dbReference type="OMA" id="QVDTEMN"/>
<dbReference type="OrthoDB" id="1875751at2759"/>
<dbReference type="PhylomeDB" id="Q640A2"/>
<dbReference type="TreeFam" id="TF314808"/>
<dbReference type="Proteomes" id="UP000008143">
    <property type="component" value="Chromosome 1"/>
</dbReference>
<dbReference type="Bgee" id="ENSXETG00000023026">
    <property type="expression patterns" value="Expressed in gastrula and 26 other cell types or tissues"/>
</dbReference>
<dbReference type="GO" id="GO:0005737">
    <property type="term" value="C:cytoplasm"/>
    <property type="evidence" value="ECO:0007669"/>
    <property type="project" value="UniProtKB-SubCell"/>
</dbReference>
<dbReference type="GO" id="GO:0005634">
    <property type="term" value="C:nucleus"/>
    <property type="evidence" value="ECO:0007669"/>
    <property type="project" value="UniProtKB-SubCell"/>
</dbReference>
<dbReference type="GO" id="GO:0003677">
    <property type="term" value="F:DNA binding"/>
    <property type="evidence" value="ECO:0007669"/>
    <property type="project" value="UniProtKB-KW"/>
</dbReference>
<dbReference type="GO" id="GO:0003723">
    <property type="term" value="F:RNA binding"/>
    <property type="evidence" value="ECO:0007669"/>
    <property type="project" value="UniProtKB-KW"/>
</dbReference>
<dbReference type="CDD" id="cd12758">
    <property type="entry name" value="RRM1_hnRPDL"/>
    <property type="match status" value="1"/>
</dbReference>
<dbReference type="CDD" id="cd12585">
    <property type="entry name" value="RRM2_hnRPDL"/>
    <property type="match status" value="1"/>
</dbReference>
<dbReference type="FunFam" id="3.30.70.330:FF:000220">
    <property type="entry name" value="Heterogeneous nuclear ribonucleoprotein D-like protein"/>
    <property type="match status" value="1"/>
</dbReference>
<dbReference type="FunFam" id="3.30.70.330:FF:000030">
    <property type="entry name" value="Heterogeneous nuclear ribonucleoprotein d0 isoform"/>
    <property type="match status" value="1"/>
</dbReference>
<dbReference type="Gene3D" id="3.30.70.330">
    <property type="match status" value="2"/>
</dbReference>
<dbReference type="InterPro" id="IPR034847">
    <property type="entry name" value="hnRPDL_RRM1"/>
</dbReference>
<dbReference type="InterPro" id="IPR012677">
    <property type="entry name" value="Nucleotide-bd_a/b_plait_sf"/>
</dbReference>
<dbReference type="InterPro" id="IPR035979">
    <property type="entry name" value="RBD_domain_sf"/>
</dbReference>
<dbReference type="InterPro" id="IPR000504">
    <property type="entry name" value="RRM_dom"/>
</dbReference>
<dbReference type="PANTHER" id="PTHR48033:SF2">
    <property type="entry name" value="HETEROGENEOUS NUCLEAR RIBONUCLEOPROTEIN D-LIKE"/>
    <property type="match status" value="1"/>
</dbReference>
<dbReference type="PANTHER" id="PTHR48033">
    <property type="entry name" value="RNA-BINDING (RRM/RBD/RNP MOTIFS) FAMILY PROTEIN"/>
    <property type="match status" value="1"/>
</dbReference>
<dbReference type="Pfam" id="PF00076">
    <property type="entry name" value="RRM_1"/>
    <property type="match status" value="2"/>
</dbReference>
<dbReference type="SMART" id="SM00360">
    <property type="entry name" value="RRM"/>
    <property type="match status" value="2"/>
</dbReference>
<dbReference type="SUPFAM" id="SSF54928">
    <property type="entry name" value="RNA-binding domain, RBD"/>
    <property type="match status" value="2"/>
</dbReference>
<dbReference type="PROSITE" id="PS50102">
    <property type="entry name" value="RRM"/>
    <property type="match status" value="2"/>
</dbReference>
<reference key="1">
    <citation type="submission" date="2006-10" db="EMBL/GenBank/DDBJ databases">
        <authorList>
            <consortium name="Sanger Xenopus tropicalis EST/cDNA project"/>
        </authorList>
    </citation>
    <scope>NUCLEOTIDE SEQUENCE [LARGE SCALE MRNA]</scope>
    <source>
        <tissue>Neurula</tissue>
    </source>
</reference>
<reference key="2">
    <citation type="submission" date="2004-09" db="EMBL/GenBank/DDBJ databases">
        <authorList>
            <consortium name="NIH - Xenopus Gene Collection (XGC) project"/>
        </authorList>
    </citation>
    <scope>NUCLEOTIDE SEQUENCE [LARGE SCALE MRNA]</scope>
    <source>
        <tissue>Embryo</tissue>
    </source>
</reference>
<sequence>MTGFGATPDFNEGSKINASKNQQDEGKMFIGGLSWDTSKKDLTEYLSRFGEVVDCTIKTDPVTGRSRGFGFVLFKDAVSVDKVLETKEHKLDGKLIDPKRAKALKGKEPPKKVFVGGLSPETTEEQIKQYFGGFGEIENIELPMDTKTNERRGFCFVTYTGEEPVKKLLESRFHQIGTGKCEIKVAQPKEVYRQQQQKQQKGGRGAATGRGGARGRGRGQGWNQGYSNYYDQNYGSYGNNGSYADQGYNNSYSGYDYSGYNYGSYGYNQGYTDYSGQQSTYGKARGGGNHQNNYQPY</sequence>
<protein>
    <recommendedName>
        <fullName>Heterogeneous nuclear ribonucleoprotein D-like</fullName>
        <shortName>hnRNP D-like</shortName>
        <shortName>hnRNP DL</shortName>
    </recommendedName>
</protein>